<reference key="1">
    <citation type="submission" date="2008-05" db="EMBL/GenBank/DDBJ databases">
        <title>Complete sequence of Shigella boydii serotype 18 strain BS512.</title>
        <authorList>
            <person name="Rasko D.A."/>
            <person name="Rosovitz M."/>
            <person name="Maurelli A.T."/>
            <person name="Myers G."/>
            <person name="Seshadri R."/>
            <person name="Cer R."/>
            <person name="Jiang L."/>
            <person name="Ravel J."/>
            <person name="Sebastian Y."/>
        </authorList>
    </citation>
    <scope>NUCLEOTIDE SEQUENCE [LARGE SCALE GENOMIC DNA]</scope>
    <source>
        <strain>CDC 3083-94 / BS512</strain>
    </source>
</reference>
<keyword id="KW-0131">Cell cycle</keyword>
<keyword id="KW-0132">Cell division</keyword>
<keyword id="KW-0997">Cell inner membrane</keyword>
<keyword id="KW-1003">Cell membrane</keyword>
<keyword id="KW-0472">Membrane</keyword>
<keyword id="KW-1185">Reference proteome</keyword>
<keyword id="KW-0812">Transmembrane</keyword>
<keyword id="KW-1133">Transmembrane helix</keyword>
<comment type="function">
    <text evidence="1">Essential cell division protein that stabilizes the FtsZ protofilaments by cross-linking them and that serves as a cytoplasmic membrane anchor for the Z ring. Also required for the recruitment to the septal ring of downstream cell division proteins.</text>
</comment>
<comment type="subunit">
    <text evidence="1">Interacts with FtsZ via their C-terminal domains.</text>
</comment>
<comment type="subcellular location">
    <subcellularLocation>
        <location evidence="1">Cell inner membrane</location>
        <topology evidence="1">Single-pass type I membrane protein</topology>
    </subcellularLocation>
    <text evidence="1">Localizes to the Z ring in an FtsZ-dependent manner.</text>
</comment>
<comment type="similarity">
    <text evidence="1">Belongs to the ZipA family.</text>
</comment>
<feature type="chain" id="PRO_1000127233" description="Cell division protein ZipA">
    <location>
        <begin position="1"/>
        <end position="328"/>
    </location>
</feature>
<feature type="topological domain" description="Periplasmic" evidence="1">
    <location>
        <begin position="1"/>
        <end position="6"/>
    </location>
</feature>
<feature type="transmembrane region" description="Helical" evidence="1">
    <location>
        <begin position="7"/>
        <end position="27"/>
    </location>
</feature>
<feature type="topological domain" description="Cytoplasmic" evidence="1">
    <location>
        <begin position="28"/>
        <end position="328"/>
    </location>
</feature>
<feature type="region of interest" description="Disordered" evidence="2">
    <location>
        <begin position="43"/>
        <end position="64"/>
    </location>
</feature>
<feature type="region of interest" description="Disordered" evidence="2">
    <location>
        <begin position="77"/>
        <end position="186"/>
    </location>
</feature>
<feature type="compositionally biased region" description="Acidic residues" evidence="2">
    <location>
        <begin position="51"/>
        <end position="63"/>
    </location>
</feature>
<feature type="compositionally biased region" description="Low complexity" evidence="2">
    <location>
        <begin position="99"/>
        <end position="115"/>
    </location>
</feature>
<feature type="compositionally biased region" description="Low complexity" evidence="2">
    <location>
        <begin position="123"/>
        <end position="171"/>
    </location>
</feature>
<dbReference type="EMBL" id="CP001063">
    <property type="protein sequence ID" value="ACD07914.1"/>
    <property type="molecule type" value="Genomic_DNA"/>
</dbReference>
<dbReference type="RefSeq" id="WP_005030504.1">
    <property type="nucleotide sequence ID" value="NC_010658.1"/>
</dbReference>
<dbReference type="SMR" id="B2TWZ6"/>
<dbReference type="STRING" id="344609.SbBS512_E2768"/>
<dbReference type="KEGG" id="sbc:SbBS512_E2768"/>
<dbReference type="HOGENOM" id="CLU_030174_1_0_6"/>
<dbReference type="Proteomes" id="UP000001030">
    <property type="component" value="Chromosome"/>
</dbReference>
<dbReference type="GO" id="GO:0032153">
    <property type="term" value="C:cell division site"/>
    <property type="evidence" value="ECO:0007669"/>
    <property type="project" value="UniProtKB-UniRule"/>
</dbReference>
<dbReference type="GO" id="GO:0005886">
    <property type="term" value="C:plasma membrane"/>
    <property type="evidence" value="ECO:0007669"/>
    <property type="project" value="UniProtKB-SubCell"/>
</dbReference>
<dbReference type="GO" id="GO:0000917">
    <property type="term" value="P:division septum assembly"/>
    <property type="evidence" value="ECO:0007669"/>
    <property type="project" value="TreeGrafter"/>
</dbReference>
<dbReference type="GO" id="GO:0043093">
    <property type="term" value="P:FtsZ-dependent cytokinesis"/>
    <property type="evidence" value="ECO:0007669"/>
    <property type="project" value="UniProtKB-UniRule"/>
</dbReference>
<dbReference type="CDD" id="cd00231">
    <property type="entry name" value="ZipA"/>
    <property type="match status" value="1"/>
</dbReference>
<dbReference type="FunFam" id="3.30.1400.10:FF:000001">
    <property type="entry name" value="Cell division protein ZipA"/>
    <property type="match status" value="1"/>
</dbReference>
<dbReference type="Gene3D" id="3.30.1400.10">
    <property type="entry name" value="ZipA, C-terminal FtsZ-binding domain"/>
    <property type="match status" value="1"/>
</dbReference>
<dbReference type="HAMAP" id="MF_00509">
    <property type="entry name" value="ZipA"/>
    <property type="match status" value="1"/>
</dbReference>
<dbReference type="InterPro" id="IPR011919">
    <property type="entry name" value="Cell_div_ZipA"/>
</dbReference>
<dbReference type="InterPro" id="IPR007449">
    <property type="entry name" value="ZipA_FtsZ-bd_C"/>
</dbReference>
<dbReference type="InterPro" id="IPR036765">
    <property type="entry name" value="ZipA_FtsZ-bd_C_sf"/>
</dbReference>
<dbReference type="NCBIfam" id="TIGR02205">
    <property type="entry name" value="septum_zipA"/>
    <property type="match status" value="1"/>
</dbReference>
<dbReference type="PANTHER" id="PTHR38685">
    <property type="entry name" value="CELL DIVISION PROTEIN ZIPA"/>
    <property type="match status" value="1"/>
</dbReference>
<dbReference type="PANTHER" id="PTHR38685:SF1">
    <property type="entry name" value="CELL DIVISION PROTEIN ZIPA"/>
    <property type="match status" value="1"/>
</dbReference>
<dbReference type="Pfam" id="PF04354">
    <property type="entry name" value="ZipA_C"/>
    <property type="match status" value="1"/>
</dbReference>
<dbReference type="SMART" id="SM00771">
    <property type="entry name" value="ZipA_C"/>
    <property type="match status" value="1"/>
</dbReference>
<dbReference type="SUPFAM" id="SSF64383">
    <property type="entry name" value="Cell-division protein ZipA, C-terminal domain"/>
    <property type="match status" value="1"/>
</dbReference>
<evidence type="ECO:0000255" key="1">
    <source>
        <dbReference type="HAMAP-Rule" id="MF_00509"/>
    </source>
</evidence>
<evidence type="ECO:0000256" key="2">
    <source>
        <dbReference type="SAM" id="MobiDB-lite"/>
    </source>
</evidence>
<proteinExistence type="inferred from homology"/>
<accession>B2TWZ6</accession>
<gene>
    <name evidence="1" type="primary">zipA</name>
    <name type="ordered locus">SbBS512_E2768</name>
</gene>
<name>ZIPA_SHIB3</name>
<protein>
    <recommendedName>
        <fullName evidence="1">Cell division protein ZipA</fullName>
    </recommendedName>
</protein>
<sequence length="328" mass="36570">MMQDLRLILIIVGAIAIIALLVHGFWTSRKERSSMFRDRPLKRMKSKRDDDYYDEDVEDDEGVGEVRVHRVNHAPANAQEHEAARPSPQHQYQPPYASAQPRQPVQQPPEAQVPPQHAPRPAQPVQQPAYQPQPEQPLQQPVSPQVAPAPQPVHSAPQPAQQAFQPAEPVAAPQPEPVAEPAPVMDKPKRKEAVIIMNVAAHHGSELNGELLLNSIQQAGFIFGDMNIYHRHLSPDGSGPALFSLANMVKPGTFDPEMKDFTTPGVTIFMQVPSYGDELQNFKLMLQSAQHIADEVGGVVLDDQRRMMTPQKLREYQDIIREVKDANA</sequence>
<organism>
    <name type="scientific">Shigella boydii serotype 18 (strain CDC 3083-94 / BS512)</name>
    <dbReference type="NCBI Taxonomy" id="344609"/>
    <lineage>
        <taxon>Bacteria</taxon>
        <taxon>Pseudomonadati</taxon>
        <taxon>Pseudomonadota</taxon>
        <taxon>Gammaproteobacteria</taxon>
        <taxon>Enterobacterales</taxon>
        <taxon>Enterobacteriaceae</taxon>
        <taxon>Shigella</taxon>
    </lineage>
</organism>